<feature type="chain" id="PRO_1000144174" description="Large ribosomal subunit protein uL13">
    <location>
        <begin position="1"/>
        <end position="142"/>
    </location>
</feature>
<proteinExistence type="inferred from homology"/>
<name>RL13_SALDC</name>
<organism>
    <name type="scientific">Salmonella dublin (strain CT_02021853)</name>
    <dbReference type="NCBI Taxonomy" id="439851"/>
    <lineage>
        <taxon>Bacteria</taxon>
        <taxon>Pseudomonadati</taxon>
        <taxon>Pseudomonadota</taxon>
        <taxon>Gammaproteobacteria</taxon>
        <taxon>Enterobacterales</taxon>
        <taxon>Enterobacteriaceae</taxon>
        <taxon>Salmonella</taxon>
    </lineage>
</organism>
<reference key="1">
    <citation type="journal article" date="2011" name="J. Bacteriol.">
        <title>Comparative genomics of 28 Salmonella enterica isolates: evidence for CRISPR-mediated adaptive sublineage evolution.</title>
        <authorList>
            <person name="Fricke W.F."/>
            <person name="Mammel M.K."/>
            <person name="McDermott P.F."/>
            <person name="Tartera C."/>
            <person name="White D.G."/>
            <person name="Leclerc J.E."/>
            <person name="Ravel J."/>
            <person name="Cebula T.A."/>
        </authorList>
    </citation>
    <scope>NUCLEOTIDE SEQUENCE [LARGE SCALE GENOMIC DNA]</scope>
    <source>
        <strain>CT_02021853</strain>
    </source>
</reference>
<evidence type="ECO:0000255" key="1">
    <source>
        <dbReference type="HAMAP-Rule" id="MF_01366"/>
    </source>
</evidence>
<evidence type="ECO:0000305" key="2"/>
<comment type="function">
    <text evidence="1">This protein is one of the early assembly proteins of the 50S ribosomal subunit, although it is not seen to bind rRNA by itself. It is important during the early stages of 50S assembly.</text>
</comment>
<comment type="subunit">
    <text evidence="1">Part of the 50S ribosomal subunit.</text>
</comment>
<comment type="similarity">
    <text evidence="1">Belongs to the universal ribosomal protein uL13 family.</text>
</comment>
<keyword id="KW-0687">Ribonucleoprotein</keyword>
<keyword id="KW-0689">Ribosomal protein</keyword>
<dbReference type="EMBL" id="CP001144">
    <property type="protein sequence ID" value="ACH76884.1"/>
    <property type="molecule type" value="Genomic_DNA"/>
</dbReference>
<dbReference type="RefSeq" id="WP_000847559.1">
    <property type="nucleotide sequence ID" value="NC_011205.1"/>
</dbReference>
<dbReference type="SMR" id="B5FIS3"/>
<dbReference type="GeneID" id="89518067"/>
<dbReference type="KEGG" id="sed:SeD_A3705"/>
<dbReference type="HOGENOM" id="CLU_082184_2_2_6"/>
<dbReference type="Proteomes" id="UP000008322">
    <property type="component" value="Chromosome"/>
</dbReference>
<dbReference type="GO" id="GO:0022625">
    <property type="term" value="C:cytosolic large ribosomal subunit"/>
    <property type="evidence" value="ECO:0007669"/>
    <property type="project" value="TreeGrafter"/>
</dbReference>
<dbReference type="GO" id="GO:0003729">
    <property type="term" value="F:mRNA binding"/>
    <property type="evidence" value="ECO:0007669"/>
    <property type="project" value="TreeGrafter"/>
</dbReference>
<dbReference type="GO" id="GO:0003735">
    <property type="term" value="F:structural constituent of ribosome"/>
    <property type="evidence" value="ECO:0007669"/>
    <property type="project" value="InterPro"/>
</dbReference>
<dbReference type="GO" id="GO:0017148">
    <property type="term" value="P:negative regulation of translation"/>
    <property type="evidence" value="ECO:0007669"/>
    <property type="project" value="TreeGrafter"/>
</dbReference>
<dbReference type="GO" id="GO:0006412">
    <property type="term" value="P:translation"/>
    <property type="evidence" value="ECO:0007669"/>
    <property type="project" value="UniProtKB-UniRule"/>
</dbReference>
<dbReference type="CDD" id="cd00392">
    <property type="entry name" value="Ribosomal_L13"/>
    <property type="match status" value="1"/>
</dbReference>
<dbReference type="FunFam" id="3.90.1180.10:FF:000001">
    <property type="entry name" value="50S ribosomal protein L13"/>
    <property type="match status" value="1"/>
</dbReference>
<dbReference type="Gene3D" id="3.90.1180.10">
    <property type="entry name" value="Ribosomal protein L13"/>
    <property type="match status" value="1"/>
</dbReference>
<dbReference type="HAMAP" id="MF_01366">
    <property type="entry name" value="Ribosomal_uL13"/>
    <property type="match status" value="1"/>
</dbReference>
<dbReference type="InterPro" id="IPR005822">
    <property type="entry name" value="Ribosomal_uL13"/>
</dbReference>
<dbReference type="InterPro" id="IPR005823">
    <property type="entry name" value="Ribosomal_uL13_bac-type"/>
</dbReference>
<dbReference type="InterPro" id="IPR023563">
    <property type="entry name" value="Ribosomal_uL13_CS"/>
</dbReference>
<dbReference type="InterPro" id="IPR036899">
    <property type="entry name" value="Ribosomal_uL13_sf"/>
</dbReference>
<dbReference type="NCBIfam" id="TIGR01066">
    <property type="entry name" value="rplM_bact"/>
    <property type="match status" value="1"/>
</dbReference>
<dbReference type="PANTHER" id="PTHR11545:SF2">
    <property type="entry name" value="LARGE RIBOSOMAL SUBUNIT PROTEIN UL13M"/>
    <property type="match status" value="1"/>
</dbReference>
<dbReference type="PANTHER" id="PTHR11545">
    <property type="entry name" value="RIBOSOMAL PROTEIN L13"/>
    <property type="match status" value="1"/>
</dbReference>
<dbReference type="Pfam" id="PF00572">
    <property type="entry name" value="Ribosomal_L13"/>
    <property type="match status" value="1"/>
</dbReference>
<dbReference type="PIRSF" id="PIRSF002181">
    <property type="entry name" value="Ribosomal_L13"/>
    <property type="match status" value="1"/>
</dbReference>
<dbReference type="SUPFAM" id="SSF52161">
    <property type="entry name" value="Ribosomal protein L13"/>
    <property type="match status" value="1"/>
</dbReference>
<dbReference type="PROSITE" id="PS00783">
    <property type="entry name" value="RIBOSOMAL_L13"/>
    <property type="match status" value="1"/>
</dbReference>
<accession>B5FIS3</accession>
<sequence>MKTFTAKPETVKRDWYVVDATGKTLGRLATELARRLRGKHKAEYTPHVDTGDYIIVLNADKVAVTGNKRTDKVYYHHTGHIGGIKQATFEEMIARRPERVIEIAVKGMLPKGPLGRAMFRKLKVYAGNEHNHAAQQPQVLDI</sequence>
<protein>
    <recommendedName>
        <fullName evidence="1">Large ribosomal subunit protein uL13</fullName>
    </recommendedName>
    <alternativeName>
        <fullName evidence="2">50S ribosomal protein L13</fullName>
    </alternativeName>
</protein>
<gene>
    <name evidence="1" type="primary">rplM</name>
    <name type="ordered locus">SeD_A3705</name>
</gene>